<sequence>MAKIINIIGREIMDSRGNPTVEAEVHLEGGFMGMAAAPSGASTGSREALELRDGDKARYMGKGVLKAVENINGLIRDALMGKDATAQAELDQIMIDVDGTENKDKLGANAILAVSLAAAKAAAAFKGVPLYAHIADLNGTPGQYSMPVPMMNILNGGEHADNNVDIQEFMVQPVGAKSFREALRMGAEIFHSLKSVLKSKGLSTSVGDEGGFAPDLASNADALAIIKVAVEKAGYTLGTDVTLALDCAASEFYKDGQYDLSGEGKVFSANGFSDFLKSLTEQYPIASIEDGLDESDWDGWAYQTQIMGDKIQLVGDDLFVTNTKILKRGIDNGIANSILIKFNQIGSLTETLAAIRMAKDAGYTVVISHRSGETEDATIADLAVATSAGQIKTGSLCRSDRVAKYNQLLRIEEQLGEKAPYNGLKEIKGQA</sequence>
<proteinExistence type="inferred from homology"/>
<keyword id="KW-0963">Cytoplasm</keyword>
<keyword id="KW-0324">Glycolysis</keyword>
<keyword id="KW-0456">Lyase</keyword>
<keyword id="KW-0460">Magnesium</keyword>
<keyword id="KW-0479">Metal-binding</keyword>
<keyword id="KW-0964">Secreted</keyword>
<dbReference type="EC" id="4.2.1.11" evidence="1"/>
<dbReference type="EMBL" id="CP000931">
    <property type="protein sequence ID" value="ABZ75791.1"/>
    <property type="molecule type" value="Genomic_DNA"/>
</dbReference>
<dbReference type="RefSeq" id="WP_012276333.1">
    <property type="nucleotide sequence ID" value="NC_010334.1"/>
</dbReference>
<dbReference type="SMR" id="B0TK04"/>
<dbReference type="STRING" id="458817.Shal_1222"/>
<dbReference type="KEGG" id="shl:Shal_1222"/>
<dbReference type="eggNOG" id="COG0148">
    <property type="taxonomic scope" value="Bacteria"/>
</dbReference>
<dbReference type="HOGENOM" id="CLU_031223_2_1_6"/>
<dbReference type="OrthoDB" id="9804716at2"/>
<dbReference type="UniPathway" id="UPA00109">
    <property type="reaction ID" value="UER00187"/>
</dbReference>
<dbReference type="Proteomes" id="UP000001317">
    <property type="component" value="Chromosome"/>
</dbReference>
<dbReference type="GO" id="GO:0009986">
    <property type="term" value="C:cell surface"/>
    <property type="evidence" value="ECO:0007669"/>
    <property type="project" value="UniProtKB-SubCell"/>
</dbReference>
<dbReference type="GO" id="GO:0005576">
    <property type="term" value="C:extracellular region"/>
    <property type="evidence" value="ECO:0007669"/>
    <property type="project" value="UniProtKB-SubCell"/>
</dbReference>
<dbReference type="GO" id="GO:0000015">
    <property type="term" value="C:phosphopyruvate hydratase complex"/>
    <property type="evidence" value="ECO:0007669"/>
    <property type="project" value="InterPro"/>
</dbReference>
<dbReference type="GO" id="GO:0000287">
    <property type="term" value="F:magnesium ion binding"/>
    <property type="evidence" value="ECO:0007669"/>
    <property type="project" value="UniProtKB-UniRule"/>
</dbReference>
<dbReference type="GO" id="GO:0004634">
    <property type="term" value="F:phosphopyruvate hydratase activity"/>
    <property type="evidence" value="ECO:0007669"/>
    <property type="project" value="UniProtKB-UniRule"/>
</dbReference>
<dbReference type="GO" id="GO:0006096">
    <property type="term" value="P:glycolytic process"/>
    <property type="evidence" value="ECO:0007669"/>
    <property type="project" value="UniProtKB-UniRule"/>
</dbReference>
<dbReference type="CDD" id="cd03313">
    <property type="entry name" value="enolase"/>
    <property type="match status" value="1"/>
</dbReference>
<dbReference type="FunFam" id="3.20.20.120:FF:000001">
    <property type="entry name" value="Enolase"/>
    <property type="match status" value="1"/>
</dbReference>
<dbReference type="FunFam" id="3.30.390.10:FF:000001">
    <property type="entry name" value="Enolase"/>
    <property type="match status" value="1"/>
</dbReference>
<dbReference type="Gene3D" id="3.20.20.120">
    <property type="entry name" value="Enolase-like C-terminal domain"/>
    <property type="match status" value="1"/>
</dbReference>
<dbReference type="Gene3D" id="3.30.390.10">
    <property type="entry name" value="Enolase-like, N-terminal domain"/>
    <property type="match status" value="1"/>
</dbReference>
<dbReference type="HAMAP" id="MF_00318">
    <property type="entry name" value="Enolase"/>
    <property type="match status" value="1"/>
</dbReference>
<dbReference type="InterPro" id="IPR000941">
    <property type="entry name" value="Enolase"/>
</dbReference>
<dbReference type="InterPro" id="IPR036849">
    <property type="entry name" value="Enolase-like_C_sf"/>
</dbReference>
<dbReference type="InterPro" id="IPR029017">
    <property type="entry name" value="Enolase-like_N"/>
</dbReference>
<dbReference type="InterPro" id="IPR020810">
    <property type="entry name" value="Enolase_C"/>
</dbReference>
<dbReference type="InterPro" id="IPR020809">
    <property type="entry name" value="Enolase_CS"/>
</dbReference>
<dbReference type="InterPro" id="IPR020811">
    <property type="entry name" value="Enolase_N"/>
</dbReference>
<dbReference type="NCBIfam" id="TIGR01060">
    <property type="entry name" value="eno"/>
    <property type="match status" value="1"/>
</dbReference>
<dbReference type="PANTHER" id="PTHR11902">
    <property type="entry name" value="ENOLASE"/>
    <property type="match status" value="1"/>
</dbReference>
<dbReference type="PANTHER" id="PTHR11902:SF1">
    <property type="entry name" value="ENOLASE"/>
    <property type="match status" value="1"/>
</dbReference>
<dbReference type="Pfam" id="PF00113">
    <property type="entry name" value="Enolase_C"/>
    <property type="match status" value="1"/>
</dbReference>
<dbReference type="Pfam" id="PF03952">
    <property type="entry name" value="Enolase_N"/>
    <property type="match status" value="1"/>
</dbReference>
<dbReference type="PIRSF" id="PIRSF001400">
    <property type="entry name" value="Enolase"/>
    <property type="match status" value="1"/>
</dbReference>
<dbReference type="PRINTS" id="PR00148">
    <property type="entry name" value="ENOLASE"/>
</dbReference>
<dbReference type="SFLD" id="SFLDS00001">
    <property type="entry name" value="Enolase"/>
    <property type="match status" value="1"/>
</dbReference>
<dbReference type="SFLD" id="SFLDF00002">
    <property type="entry name" value="enolase"/>
    <property type="match status" value="1"/>
</dbReference>
<dbReference type="SMART" id="SM01192">
    <property type="entry name" value="Enolase_C"/>
    <property type="match status" value="1"/>
</dbReference>
<dbReference type="SMART" id="SM01193">
    <property type="entry name" value="Enolase_N"/>
    <property type="match status" value="1"/>
</dbReference>
<dbReference type="SUPFAM" id="SSF51604">
    <property type="entry name" value="Enolase C-terminal domain-like"/>
    <property type="match status" value="1"/>
</dbReference>
<dbReference type="SUPFAM" id="SSF54826">
    <property type="entry name" value="Enolase N-terminal domain-like"/>
    <property type="match status" value="1"/>
</dbReference>
<dbReference type="PROSITE" id="PS00164">
    <property type="entry name" value="ENOLASE"/>
    <property type="match status" value="1"/>
</dbReference>
<protein>
    <recommendedName>
        <fullName evidence="1">Enolase</fullName>
        <ecNumber evidence="1">4.2.1.11</ecNumber>
    </recommendedName>
    <alternativeName>
        <fullName evidence="1">2-phospho-D-glycerate hydro-lyase</fullName>
    </alternativeName>
    <alternativeName>
        <fullName evidence="1">2-phosphoglycerate dehydratase</fullName>
    </alternativeName>
</protein>
<name>ENO_SHEHH</name>
<accession>B0TK04</accession>
<comment type="function">
    <text evidence="1">Catalyzes the reversible conversion of 2-phosphoglycerate (2-PG) into phosphoenolpyruvate (PEP). It is essential for the degradation of carbohydrates via glycolysis.</text>
</comment>
<comment type="catalytic activity">
    <reaction evidence="1">
        <text>(2R)-2-phosphoglycerate = phosphoenolpyruvate + H2O</text>
        <dbReference type="Rhea" id="RHEA:10164"/>
        <dbReference type="ChEBI" id="CHEBI:15377"/>
        <dbReference type="ChEBI" id="CHEBI:58289"/>
        <dbReference type="ChEBI" id="CHEBI:58702"/>
        <dbReference type="EC" id="4.2.1.11"/>
    </reaction>
</comment>
<comment type="cofactor">
    <cofactor evidence="1">
        <name>Mg(2+)</name>
        <dbReference type="ChEBI" id="CHEBI:18420"/>
    </cofactor>
    <text evidence="1">Binds a second Mg(2+) ion via substrate during catalysis.</text>
</comment>
<comment type="pathway">
    <text evidence="1">Carbohydrate degradation; glycolysis; pyruvate from D-glyceraldehyde 3-phosphate: step 4/5.</text>
</comment>
<comment type="subunit">
    <text evidence="1">Component of the RNA degradosome, a multiprotein complex involved in RNA processing and mRNA degradation.</text>
</comment>
<comment type="subcellular location">
    <subcellularLocation>
        <location evidence="1">Cytoplasm</location>
    </subcellularLocation>
    <subcellularLocation>
        <location evidence="1">Secreted</location>
    </subcellularLocation>
    <subcellularLocation>
        <location evidence="1">Cell surface</location>
    </subcellularLocation>
    <text evidence="1">Fractions of enolase are present in both the cytoplasm and on the cell surface.</text>
</comment>
<comment type="similarity">
    <text evidence="1">Belongs to the enolase family.</text>
</comment>
<organism>
    <name type="scientific">Shewanella halifaxensis (strain HAW-EB4)</name>
    <dbReference type="NCBI Taxonomy" id="458817"/>
    <lineage>
        <taxon>Bacteria</taxon>
        <taxon>Pseudomonadati</taxon>
        <taxon>Pseudomonadota</taxon>
        <taxon>Gammaproteobacteria</taxon>
        <taxon>Alteromonadales</taxon>
        <taxon>Shewanellaceae</taxon>
        <taxon>Shewanella</taxon>
    </lineage>
</organism>
<gene>
    <name evidence="1" type="primary">eno</name>
    <name type="ordered locus">Shal_1222</name>
</gene>
<reference key="1">
    <citation type="submission" date="2008-01" db="EMBL/GenBank/DDBJ databases">
        <title>Complete sequence of Shewanella halifaxensis HAW-EB4.</title>
        <authorList>
            <consortium name="US DOE Joint Genome Institute"/>
            <person name="Copeland A."/>
            <person name="Lucas S."/>
            <person name="Lapidus A."/>
            <person name="Glavina del Rio T."/>
            <person name="Dalin E."/>
            <person name="Tice H."/>
            <person name="Bruce D."/>
            <person name="Goodwin L."/>
            <person name="Pitluck S."/>
            <person name="Sims D."/>
            <person name="Brettin T."/>
            <person name="Detter J.C."/>
            <person name="Han C."/>
            <person name="Kuske C.R."/>
            <person name="Schmutz J."/>
            <person name="Larimer F."/>
            <person name="Land M."/>
            <person name="Hauser L."/>
            <person name="Kyrpides N."/>
            <person name="Kim E."/>
            <person name="Zhao J.-S."/>
            <person name="Richardson P."/>
        </authorList>
    </citation>
    <scope>NUCLEOTIDE SEQUENCE [LARGE SCALE GENOMIC DNA]</scope>
    <source>
        <strain>HAW-EB4</strain>
    </source>
</reference>
<evidence type="ECO:0000255" key="1">
    <source>
        <dbReference type="HAMAP-Rule" id="MF_00318"/>
    </source>
</evidence>
<feature type="chain" id="PRO_1000079151" description="Enolase">
    <location>
        <begin position="1"/>
        <end position="431"/>
    </location>
</feature>
<feature type="active site" description="Proton donor" evidence="1">
    <location>
        <position position="209"/>
    </location>
</feature>
<feature type="active site" description="Proton acceptor" evidence="1">
    <location>
        <position position="341"/>
    </location>
</feature>
<feature type="binding site" evidence="1">
    <location>
        <position position="167"/>
    </location>
    <ligand>
        <name>(2R)-2-phosphoglycerate</name>
        <dbReference type="ChEBI" id="CHEBI:58289"/>
    </ligand>
</feature>
<feature type="binding site" evidence="1">
    <location>
        <position position="246"/>
    </location>
    <ligand>
        <name>Mg(2+)</name>
        <dbReference type="ChEBI" id="CHEBI:18420"/>
    </ligand>
</feature>
<feature type="binding site" evidence="1">
    <location>
        <position position="289"/>
    </location>
    <ligand>
        <name>Mg(2+)</name>
        <dbReference type="ChEBI" id="CHEBI:18420"/>
    </ligand>
</feature>
<feature type="binding site" evidence="1">
    <location>
        <position position="316"/>
    </location>
    <ligand>
        <name>Mg(2+)</name>
        <dbReference type="ChEBI" id="CHEBI:18420"/>
    </ligand>
</feature>
<feature type="binding site" evidence="1">
    <location>
        <position position="341"/>
    </location>
    <ligand>
        <name>(2R)-2-phosphoglycerate</name>
        <dbReference type="ChEBI" id="CHEBI:58289"/>
    </ligand>
</feature>
<feature type="binding site" evidence="1">
    <location>
        <position position="370"/>
    </location>
    <ligand>
        <name>(2R)-2-phosphoglycerate</name>
        <dbReference type="ChEBI" id="CHEBI:58289"/>
    </ligand>
</feature>
<feature type="binding site" evidence="1">
    <location>
        <position position="371"/>
    </location>
    <ligand>
        <name>(2R)-2-phosphoglycerate</name>
        <dbReference type="ChEBI" id="CHEBI:58289"/>
    </ligand>
</feature>
<feature type="binding site" evidence="1">
    <location>
        <position position="392"/>
    </location>
    <ligand>
        <name>(2R)-2-phosphoglycerate</name>
        <dbReference type="ChEBI" id="CHEBI:58289"/>
    </ligand>
</feature>